<sequence>MTEPAAHFASHAAAARTLRIWDISPPLDERSEVFPGDTAYSQELHFSLSPGCPVNVNRITLSPHTGAHADAPLHYASGEAAIGAVDLQPYLGPCRVIHCLDCGPLVEPAHIAHALENLPPRVLLRTSRTASQSWASFTAIAPATLALLATKNIVLIGIDTPSVDPAASQNLPSHQQLLRHGLRVLENLVLDDVPEGDYELIALPLKLMRADASPVRAILRELS</sequence>
<reference key="1">
    <citation type="journal article" date="2009" name="Environ. Microbiol.">
        <title>The genome of Polaromonas naphthalenivorans strain CJ2, isolated from coal tar-contaminated sediment, reveals physiological and metabolic versatility and evolution through extensive horizontal gene transfer.</title>
        <authorList>
            <person name="Yagi J.M."/>
            <person name="Sims D."/>
            <person name="Brettin T."/>
            <person name="Bruce D."/>
            <person name="Madsen E.L."/>
        </authorList>
    </citation>
    <scope>NUCLEOTIDE SEQUENCE [LARGE SCALE GENOMIC DNA]</scope>
    <source>
        <strain>CJ2</strain>
    </source>
</reference>
<comment type="function">
    <text evidence="1">Catalyzes the hydrolysis of N-formyl-L-kynurenine to L-kynurenine, the second step in the kynurenine pathway of tryptophan degradation.</text>
</comment>
<comment type="catalytic activity">
    <reaction evidence="1">
        <text>N-formyl-L-kynurenine + H2O = L-kynurenine + formate + H(+)</text>
        <dbReference type="Rhea" id="RHEA:13009"/>
        <dbReference type="ChEBI" id="CHEBI:15377"/>
        <dbReference type="ChEBI" id="CHEBI:15378"/>
        <dbReference type="ChEBI" id="CHEBI:15740"/>
        <dbReference type="ChEBI" id="CHEBI:57959"/>
        <dbReference type="ChEBI" id="CHEBI:58629"/>
        <dbReference type="EC" id="3.5.1.9"/>
    </reaction>
</comment>
<comment type="cofactor">
    <cofactor evidence="1">
        <name>Zn(2+)</name>
        <dbReference type="ChEBI" id="CHEBI:29105"/>
    </cofactor>
    <text evidence="1">Binds 2 zinc ions per subunit.</text>
</comment>
<comment type="pathway">
    <text evidence="1">Amino-acid degradation; L-tryptophan degradation via kynurenine pathway; L-kynurenine from L-tryptophan: step 2/2.</text>
</comment>
<comment type="subunit">
    <text evidence="1">Homodimer.</text>
</comment>
<comment type="similarity">
    <text evidence="1">Belongs to the Cyclase 1 superfamily. KynB family.</text>
</comment>
<protein>
    <recommendedName>
        <fullName evidence="1">Kynurenine formamidase</fullName>
        <shortName evidence="1">KFA</shortName>
        <shortName evidence="1">KFase</shortName>
        <ecNumber evidence="1">3.5.1.9</ecNumber>
    </recommendedName>
    <alternativeName>
        <fullName evidence="1">Arylformamidase</fullName>
    </alternativeName>
    <alternativeName>
        <fullName evidence="1">N-formylkynurenine formamidase</fullName>
        <shortName evidence="1">FKF</shortName>
    </alternativeName>
</protein>
<name>KYNB_POLNA</name>
<feature type="chain" id="PRO_0000362126" description="Kynurenine formamidase">
    <location>
        <begin position="1"/>
        <end position="223"/>
    </location>
</feature>
<feature type="active site" description="Proton donor/acceptor" evidence="1">
    <location>
        <position position="74"/>
    </location>
</feature>
<feature type="binding site" evidence="1">
    <location>
        <position position="34"/>
    </location>
    <ligand>
        <name>substrate</name>
    </ligand>
</feature>
<feature type="binding site" evidence="1">
    <location>
        <position position="64"/>
    </location>
    <ligand>
        <name>Zn(2+)</name>
        <dbReference type="ChEBI" id="CHEBI:29105"/>
        <label>1</label>
    </ligand>
</feature>
<feature type="binding site" evidence="1">
    <location>
        <position position="68"/>
    </location>
    <ligand>
        <name>Zn(2+)</name>
        <dbReference type="ChEBI" id="CHEBI:29105"/>
        <label>1</label>
    </ligand>
</feature>
<feature type="binding site" evidence="1">
    <location>
        <position position="70"/>
    </location>
    <ligand>
        <name>Zn(2+)</name>
        <dbReference type="ChEBI" id="CHEBI:29105"/>
        <label>1</label>
    </ligand>
</feature>
<feature type="binding site" evidence="1">
    <location>
        <position position="70"/>
    </location>
    <ligand>
        <name>Zn(2+)</name>
        <dbReference type="ChEBI" id="CHEBI:29105"/>
        <label>2</label>
    </ligand>
</feature>
<feature type="binding site" evidence="1">
    <location>
        <position position="174"/>
    </location>
    <ligand>
        <name>Zn(2+)</name>
        <dbReference type="ChEBI" id="CHEBI:29105"/>
        <label>2</label>
    </ligand>
</feature>
<feature type="binding site" evidence="1">
    <location>
        <position position="186"/>
    </location>
    <ligand>
        <name>Zn(2+)</name>
        <dbReference type="ChEBI" id="CHEBI:29105"/>
        <label>1</label>
    </ligand>
</feature>
<feature type="binding site" evidence="1">
    <location>
        <position position="186"/>
    </location>
    <ligand>
        <name>Zn(2+)</name>
        <dbReference type="ChEBI" id="CHEBI:29105"/>
        <label>2</label>
    </ligand>
</feature>
<proteinExistence type="inferred from homology"/>
<gene>
    <name evidence="1" type="primary">kynB</name>
    <name type="ordered locus">Pnap_3018</name>
</gene>
<organism>
    <name type="scientific">Polaromonas naphthalenivorans (strain CJ2)</name>
    <dbReference type="NCBI Taxonomy" id="365044"/>
    <lineage>
        <taxon>Bacteria</taxon>
        <taxon>Pseudomonadati</taxon>
        <taxon>Pseudomonadota</taxon>
        <taxon>Betaproteobacteria</taxon>
        <taxon>Burkholderiales</taxon>
        <taxon>Comamonadaceae</taxon>
        <taxon>Polaromonas</taxon>
    </lineage>
</organism>
<keyword id="KW-0378">Hydrolase</keyword>
<keyword id="KW-0479">Metal-binding</keyword>
<keyword id="KW-1185">Reference proteome</keyword>
<keyword id="KW-0823">Tryptophan catabolism</keyword>
<keyword id="KW-0862">Zinc</keyword>
<accession>A1VRN9</accession>
<dbReference type="EC" id="3.5.1.9" evidence="1"/>
<dbReference type="EMBL" id="CP000529">
    <property type="protein sequence ID" value="ABM38317.1"/>
    <property type="molecule type" value="Genomic_DNA"/>
</dbReference>
<dbReference type="RefSeq" id="WP_011802389.1">
    <property type="nucleotide sequence ID" value="NC_008781.1"/>
</dbReference>
<dbReference type="SMR" id="A1VRN9"/>
<dbReference type="STRING" id="365044.Pnap_3018"/>
<dbReference type="KEGG" id="pna:Pnap_3018"/>
<dbReference type="eggNOG" id="COG1878">
    <property type="taxonomic scope" value="Bacteria"/>
</dbReference>
<dbReference type="HOGENOM" id="CLU_030671_3_1_4"/>
<dbReference type="OrthoDB" id="9796085at2"/>
<dbReference type="UniPathway" id="UPA00333">
    <property type="reaction ID" value="UER00454"/>
</dbReference>
<dbReference type="Proteomes" id="UP000000644">
    <property type="component" value="Chromosome"/>
</dbReference>
<dbReference type="GO" id="GO:0004061">
    <property type="term" value="F:arylformamidase activity"/>
    <property type="evidence" value="ECO:0000250"/>
    <property type="project" value="UniProtKB"/>
</dbReference>
<dbReference type="GO" id="GO:0004328">
    <property type="term" value="F:formamidase activity"/>
    <property type="evidence" value="ECO:0007669"/>
    <property type="project" value="InterPro"/>
</dbReference>
<dbReference type="GO" id="GO:0008270">
    <property type="term" value="F:zinc ion binding"/>
    <property type="evidence" value="ECO:0007669"/>
    <property type="project" value="UniProtKB-UniRule"/>
</dbReference>
<dbReference type="GO" id="GO:0043420">
    <property type="term" value="P:anthranilate metabolic process"/>
    <property type="evidence" value="ECO:0000250"/>
    <property type="project" value="UniProtKB"/>
</dbReference>
<dbReference type="GO" id="GO:0019441">
    <property type="term" value="P:L-tryptophan catabolic process to kynurenine"/>
    <property type="evidence" value="ECO:0000250"/>
    <property type="project" value="UniProtKB"/>
</dbReference>
<dbReference type="FunFam" id="3.50.30.50:FF:000001">
    <property type="entry name" value="Kynurenine formamidase"/>
    <property type="match status" value="1"/>
</dbReference>
<dbReference type="Gene3D" id="3.50.30.50">
    <property type="entry name" value="Putative cyclase"/>
    <property type="match status" value="1"/>
</dbReference>
<dbReference type="HAMAP" id="MF_01969">
    <property type="entry name" value="KynB"/>
    <property type="match status" value="1"/>
</dbReference>
<dbReference type="InterPro" id="IPR007325">
    <property type="entry name" value="KFase/CYL"/>
</dbReference>
<dbReference type="InterPro" id="IPR037175">
    <property type="entry name" value="KFase_sf"/>
</dbReference>
<dbReference type="InterPro" id="IPR017484">
    <property type="entry name" value="Kynurenine_formamidase_bac"/>
</dbReference>
<dbReference type="NCBIfam" id="TIGR03035">
    <property type="entry name" value="trp_arylform"/>
    <property type="match status" value="1"/>
</dbReference>
<dbReference type="PANTHER" id="PTHR31118">
    <property type="entry name" value="CYCLASE-LIKE PROTEIN 2"/>
    <property type="match status" value="1"/>
</dbReference>
<dbReference type="PANTHER" id="PTHR31118:SF32">
    <property type="entry name" value="KYNURENINE FORMAMIDASE"/>
    <property type="match status" value="1"/>
</dbReference>
<dbReference type="Pfam" id="PF04199">
    <property type="entry name" value="Cyclase"/>
    <property type="match status" value="1"/>
</dbReference>
<dbReference type="SUPFAM" id="SSF102198">
    <property type="entry name" value="Putative cyclase"/>
    <property type="match status" value="1"/>
</dbReference>
<evidence type="ECO:0000255" key="1">
    <source>
        <dbReference type="HAMAP-Rule" id="MF_01969"/>
    </source>
</evidence>